<organism>
    <name type="scientific">Homo sapiens</name>
    <name type="common">Human</name>
    <dbReference type="NCBI Taxonomy" id="9606"/>
    <lineage>
        <taxon>Eukaryota</taxon>
        <taxon>Metazoa</taxon>
        <taxon>Chordata</taxon>
        <taxon>Craniata</taxon>
        <taxon>Vertebrata</taxon>
        <taxon>Euteleostomi</taxon>
        <taxon>Mammalia</taxon>
        <taxon>Eutheria</taxon>
        <taxon>Euarchontoglires</taxon>
        <taxon>Primates</taxon>
        <taxon>Haplorrhini</taxon>
        <taxon>Catarrhini</taxon>
        <taxon>Hominidae</taxon>
        <taxon>Homo</taxon>
    </lineage>
</organism>
<accession>Q8WVL7</accession>
<accession>Q8NDF2</accession>
<accession>Q96JE5</accession>
<accession>Q9NXK7</accession>
<evidence type="ECO:0000250" key="1">
    <source>
        <dbReference type="UniProtKB" id="Q8VE42"/>
    </source>
</evidence>
<evidence type="ECO:0000269" key="2">
    <source>
    </source>
</evidence>
<evidence type="ECO:0000269" key="3">
    <source>
    </source>
</evidence>
<evidence type="ECO:0000305" key="4"/>
<evidence type="ECO:0007744" key="5">
    <source>
    </source>
</evidence>
<comment type="function">
    <text evidence="1 2 3">Induces HBG1 expression (PubMed:11162141, PubMed:16131492). May have a role in spermatogenesis where it promotes autophagy in response to serum starvation, via the NF-kappaB pathway (By similarity).</text>
</comment>
<comment type="interaction">
    <interactant intactId="EBI-9381820">
        <id>Q8WVL7</id>
    </interactant>
    <interactant intactId="EBI-744099">
        <id>Q9H0I2</id>
        <label>ENKD1</label>
    </interactant>
    <organismsDiffer>false</organismsDiffer>
    <experiments>3</experiments>
</comment>
<comment type="interaction">
    <interactant intactId="EBI-9381820">
        <id>Q8WVL7</id>
    </interactant>
    <interactant intactId="EBI-719882">
        <id>Q9UIM3</id>
        <label>FKBPL</label>
    </interactant>
    <organismsDiffer>false</organismsDiffer>
    <experiments>8</experiments>
</comment>
<comment type="interaction">
    <interactant intactId="EBI-9381820">
        <id>Q8WVL7</id>
    </interactant>
    <interactant intactId="EBI-745632">
        <id>Q9NWT6</id>
        <label>HIF1AN</label>
    </interactant>
    <organismsDiffer>false</organismsDiffer>
    <experiments>7</experiments>
</comment>
<comment type="interaction">
    <interactant intactId="EBI-9381820">
        <id>Q8WVL7</id>
    </interactant>
    <interactant intactId="EBI-286642">
        <id>P62826</id>
        <label>RAN</label>
    </interactant>
    <organismsDiffer>false</organismsDiffer>
    <experiments>2</experiments>
</comment>
<comment type="interaction">
    <interactant intactId="EBI-9381820">
        <id>Q8WVL7</id>
    </interactant>
    <interactant intactId="EBI-358489">
        <id>Q96GM5</id>
        <label>SMARCD1</label>
    </interactant>
    <organismsDiffer>false</organismsDiffer>
    <experiments>4</experiments>
</comment>
<comment type="subcellular location">
    <subcellularLocation>
        <location evidence="1">Nucleus</location>
    </subcellularLocation>
</comment>
<comment type="tissue specificity">
    <text evidence="2">Widely expressed in fetus, at a high level in fetal liver, brain and lung.</text>
</comment>
<gene>
    <name type="primary">ANKRD49</name>
    <name type="synonym">FGIF</name>
</gene>
<feature type="chain" id="PRO_0000244585" description="Ankyrin repeat domain-containing protein 49">
    <location>
        <begin position="1"/>
        <end position="239"/>
    </location>
</feature>
<feature type="repeat" description="ANK 1">
    <location>
        <begin position="73"/>
        <end position="103"/>
    </location>
</feature>
<feature type="repeat" description="ANK 2">
    <location>
        <begin position="107"/>
        <end position="136"/>
    </location>
</feature>
<feature type="repeat" description="ANK 3">
    <location>
        <begin position="140"/>
        <end position="169"/>
    </location>
</feature>
<feature type="repeat" description="ANK 4">
    <location>
        <begin position="173"/>
        <end position="206"/>
    </location>
</feature>
<feature type="modified residue" description="Phosphoserine" evidence="5">
    <location>
        <position position="49"/>
    </location>
</feature>
<feature type="sequence conflict" description="In Ref. 1; AAK60412." evidence="4" ref="1">
    <original>N</original>
    <variation>S</variation>
    <location>
        <position position="25"/>
    </location>
</feature>
<feature type="sequence conflict" description="In Ref. 2; BAA91003." evidence="4" ref="2">
    <original>K</original>
    <variation>R</variation>
    <location>
        <position position="201"/>
    </location>
</feature>
<name>ANR49_HUMAN</name>
<keyword id="KW-0040">ANK repeat</keyword>
<keyword id="KW-0221">Differentiation</keyword>
<keyword id="KW-0539">Nucleus</keyword>
<keyword id="KW-0597">Phosphoprotein</keyword>
<keyword id="KW-1267">Proteomics identification</keyword>
<keyword id="KW-1185">Reference proteome</keyword>
<keyword id="KW-0677">Repeat</keyword>
<keyword id="KW-0744">Spermatogenesis</keyword>
<dbReference type="EMBL" id="AF025354">
    <property type="protein sequence ID" value="AAK60412.1"/>
    <property type="molecule type" value="mRNA"/>
</dbReference>
<dbReference type="EMBL" id="AK000196">
    <property type="protein sequence ID" value="BAA91003.1"/>
    <property type="molecule type" value="mRNA"/>
</dbReference>
<dbReference type="EMBL" id="AL833977">
    <property type="protein sequence ID" value="CAD38821.2"/>
    <property type="molecule type" value="mRNA"/>
</dbReference>
<dbReference type="EMBL" id="BC017798">
    <property type="protein sequence ID" value="AAH17798.1"/>
    <property type="molecule type" value="mRNA"/>
</dbReference>
<dbReference type="CCDS" id="CCDS8300.1"/>
<dbReference type="RefSeq" id="NP_060174.2">
    <property type="nucleotide sequence ID" value="NM_017704.2"/>
</dbReference>
<dbReference type="RefSeq" id="XP_016873430.1">
    <property type="nucleotide sequence ID" value="XM_017017941.2"/>
</dbReference>
<dbReference type="RefSeq" id="XP_054225191.1">
    <property type="nucleotide sequence ID" value="XM_054369216.1"/>
</dbReference>
<dbReference type="SMR" id="Q8WVL7"/>
<dbReference type="BioGRID" id="120201">
    <property type="interactions" value="66"/>
</dbReference>
<dbReference type="DIP" id="DIP-61280N"/>
<dbReference type="FunCoup" id="Q8WVL7">
    <property type="interactions" value="2434"/>
</dbReference>
<dbReference type="IntAct" id="Q8WVL7">
    <property type="interactions" value="49"/>
</dbReference>
<dbReference type="MINT" id="Q8WVL7"/>
<dbReference type="STRING" id="9606.ENSP00000440396"/>
<dbReference type="iPTMnet" id="Q8WVL7"/>
<dbReference type="PhosphoSitePlus" id="Q8WVL7"/>
<dbReference type="BioMuta" id="ANKRD49"/>
<dbReference type="DMDM" id="74751554"/>
<dbReference type="jPOST" id="Q8WVL7"/>
<dbReference type="MassIVE" id="Q8WVL7"/>
<dbReference type="PaxDb" id="9606-ENSP00000440396"/>
<dbReference type="PeptideAtlas" id="Q8WVL7"/>
<dbReference type="ProteomicsDB" id="74802"/>
<dbReference type="Pumba" id="Q8WVL7"/>
<dbReference type="Antibodypedia" id="51056">
    <property type="antibodies" value="125 antibodies from 19 providers"/>
</dbReference>
<dbReference type="DNASU" id="54851"/>
<dbReference type="Ensembl" id="ENST00000302755.4">
    <property type="protein sequence ID" value="ENSP00000303518.3"/>
    <property type="gene ID" value="ENSG00000168876.9"/>
</dbReference>
<dbReference type="Ensembl" id="ENST00000544612.6">
    <property type="protein sequence ID" value="ENSP00000440396.1"/>
    <property type="gene ID" value="ENSG00000168876.9"/>
</dbReference>
<dbReference type="GeneID" id="54851"/>
<dbReference type="KEGG" id="hsa:54851"/>
<dbReference type="MANE-Select" id="ENST00000544612.6">
    <property type="protein sequence ID" value="ENSP00000440396.1"/>
    <property type="RefSeq nucleotide sequence ID" value="NM_017704.3"/>
    <property type="RefSeq protein sequence ID" value="NP_060174.2"/>
</dbReference>
<dbReference type="UCSC" id="uc001pew.4">
    <property type="organism name" value="human"/>
</dbReference>
<dbReference type="AGR" id="HGNC:25970"/>
<dbReference type="CTD" id="54851"/>
<dbReference type="DisGeNET" id="54851"/>
<dbReference type="GeneCards" id="ANKRD49"/>
<dbReference type="HGNC" id="HGNC:25970">
    <property type="gene designation" value="ANKRD49"/>
</dbReference>
<dbReference type="HPA" id="ENSG00000168876">
    <property type="expression patterns" value="Low tissue specificity"/>
</dbReference>
<dbReference type="MalaCards" id="ANKRD49"/>
<dbReference type="MIM" id="619571">
    <property type="type" value="gene"/>
</dbReference>
<dbReference type="neXtProt" id="NX_Q8WVL7"/>
<dbReference type="OpenTargets" id="ENSG00000168876"/>
<dbReference type="PharmGKB" id="PA142672615"/>
<dbReference type="VEuPathDB" id="HostDB:ENSG00000168876"/>
<dbReference type="eggNOG" id="KOG0512">
    <property type="taxonomic scope" value="Eukaryota"/>
</dbReference>
<dbReference type="GeneTree" id="ENSGT00390000003919"/>
<dbReference type="InParanoid" id="Q8WVL7"/>
<dbReference type="OMA" id="NRYVKPD"/>
<dbReference type="OrthoDB" id="19174at2759"/>
<dbReference type="PAN-GO" id="Q8WVL7">
    <property type="GO annotations" value="2 GO annotations based on evolutionary models"/>
</dbReference>
<dbReference type="PhylomeDB" id="Q8WVL7"/>
<dbReference type="TreeFam" id="TF351259"/>
<dbReference type="PathwayCommons" id="Q8WVL7"/>
<dbReference type="SignaLink" id="Q8WVL7"/>
<dbReference type="BioGRID-ORCS" id="54851">
    <property type="hits" value="362 hits in 1168 CRISPR screens"/>
</dbReference>
<dbReference type="ChiTaRS" id="ANKRD49">
    <property type="organism name" value="human"/>
</dbReference>
<dbReference type="GenomeRNAi" id="54851"/>
<dbReference type="Pharos" id="Q8WVL7">
    <property type="development level" value="Tbio"/>
</dbReference>
<dbReference type="PRO" id="PR:Q8WVL7"/>
<dbReference type="Proteomes" id="UP000005640">
    <property type="component" value="Chromosome 11"/>
</dbReference>
<dbReference type="RNAct" id="Q8WVL7">
    <property type="molecule type" value="protein"/>
</dbReference>
<dbReference type="Bgee" id="ENSG00000168876">
    <property type="expression patterns" value="Expressed in calcaneal tendon and 208 other cell types or tissues"/>
</dbReference>
<dbReference type="ExpressionAtlas" id="Q8WVL7">
    <property type="expression patterns" value="baseline and differential"/>
</dbReference>
<dbReference type="GO" id="GO:0005634">
    <property type="term" value="C:nucleus"/>
    <property type="evidence" value="ECO:0000305"/>
    <property type="project" value="UniProtKB"/>
</dbReference>
<dbReference type="GO" id="GO:0030154">
    <property type="term" value="P:cell differentiation"/>
    <property type="evidence" value="ECO:0007669"/>
    <property type="project" value="UniProtKB-KW"/>
</dbReference>
<dbReference type="GO" id="GO:0045893">
    <property type="term" value="P:positive regulation of DNA-templated transcription"/>
    <property type="evidence" value="ECO:0000314"/>
    <property type="project" value="UniProtKB"/>
</dbReference>
<dbReference type="GO" id="GO:0007283">
    <property type="term" value="P:spermatogenesis"/>
    <property type="evidence" value="ECO:0007669"/>
    <property type="project" value="UniProtKB-KW"/>
</dbReference>
<dbReference type="FunFam" id="1.25.40.20:FF:000215">
    <property type="entry name" value="ankyrin repeat domain-containing protein 49"/>
    <property type="match status" value="1"/>
</dbReference>
<dbReference type="Gene3D" id="1.25.40.20">
    <property type="entry name" value="Ankyrin repeat-containing domain"/>
    <property type="match status" value="1"/>
</dbReference>
<dbReference type="InterPro" id="IPR002110">
    <property type="entry name" value="Ankyrin_rpt"/>
</dbReference>
<dbReference type="InterPro" id="IPR036770">
    <property type="entry name" value="Ankyrin_rpt-contain_sf"/>
</dbReference>
<dbReference type="PANTHER" id="PTHR24198">
    <property type="entry name" value="ANKYRIN REPEAT AND PROTEIN KINASE DOMAIN-CONTAINING PROTEIN"/>
    <property type="match status" value="1"/>
</dbReference>
<dbReference type="PANTHER" id="PTHR24198:SF165">
    <property type="entry name" value="ANKYRIN REPEAT-CONTAINING PROTEIN-RELATED"/>
    <property type="match status" value="1"/>
</dbReference>
<dbReference type="Pfam" id="PF00023">
    <property type="entry name" value="Ank"/>
    <property type="match status" value="1"/>
</dbReference>
<dbReference type="Pfam" id="PF12796">
    <property type="entry name" value="Ank_2"/>
    <property type="match status" value="1"/>
</dbReference>
<dbReference type="PRINTS" id="PR01415">
    <property type="entry name" value="ANKYRIN"/>
</dbReference>
<dbReference type="SMART" id="SM00248">
    <property type="entry name" value="ANK"/>
    <property type="match status" value="4"/>
</dbReference>
<dbReference type="SUPFAM" id="SSF48403">
    <property type="entry name" value="Ankyrin repeat"/>
    <property type="match status" value="1"/>
</dbReference>
<dbReference type="PROSITE" id="PS50297">
    <property type="entry name" value="ANK_REP_REGION"/>
    <property type="match status" value="1"/>
</dbReference>
<dbReference type="PROSITE" id="PS50088">
    <property type="entry name" value="ANK_REPEAT"/>
    <property type="match status" value="2"/>
</dbReference>
<sequence length="239" mass="27290">MEKEKGNDDGIPDQENSLDFSEHFNQLELLETHGHLIPTGTQSLWVGNSDEDEEQDDKNEEWYRLQEKKMEKDPSRLLLWAAEKNRLTTVRRLLSEKATHVNTRDEDEYTPLHRAAYSGHLDIVQELIAQGADVHAVTVDGWTPLHSACKWNNTRVASFLLQHDADINAQTKGLLTPLHLAAGNRDSKDTLELLLMNRYVKPGLKNNLEETAFDIARRTSIYHYLFEIVEGCTNSSPQS</sequence>
<proteinExistence type="evidence at protein level"/>
<protein>
    <recommendedName>
        <fullName>Ankyrin repeat domain-containing protein 49</fullName>
    </recommendedName>
    <alternativeName>
        <fullName>Fetal globin-inducing factor</fullName>
    </alternativeName>
</protein>
<reference key="1">
    <citation type="journal article" date="2001" name="Blood Cells Mol. Dis.">
        <title>Cloning and characterization of a potential transcriptional activator of human gamma-globin genes.</title>
        <authorList>
            <person name="Yang Y."/>
            <person name="Duan Z."/>
            <person name="Skarpidi E."/>
            <person name="Li Q."/>
            <person name="Papayannopoulou T."/>
            <person name="Stamatoyannopoulos G."/>
        </authorList>
    </citation>
    <scope>NUCLEOTIDE SEQUENCE [MRNA]</scope>
    <scope>TISSUE SPECIFICITY</scope>
    <scope>FUNCTION</scope>
    <source>
        <tissue>Fetal liver</tissue>
    </source>
</reference>
<reference key="2">
    <citation type="journal article" date="2004" name="Nat. Genet.">
        <title>Complete sequencing and characterization of 21,243 full-length human cDNAs.</title>
        <authorList>
            <person name="Ota T."/>
            <person name="Suzuki Y."/>
            <person name="Nishikawa T."/>
            <person name="Otsuki T."/>
            <person name="Sugiyama T."/>
            <person name="Irie R."/>
            <person name="Wakamatsu A."/>
            <person name="Hayashi K."/>
            <person name="Sato H."/>
            <person name="Nagai K."/>
            <person name="Kimura K."/>
            <person name="Makita H."/>
            <person name="Sekine M."/>
            <person name="Obayashi M."/>
            <person name="Nishi T."/>
            <person name="Shibahara T."/>
            <person name="Tanaka T."/>
            <person name="Ishii S."/>
            <person name="Yamamoto J."/>
            <person name="Saito K."/>
            <person name="Kawai Y."/>
            <person name="Isono Y."/>
            <person name="Nakamura Y."/>
            <person name="Nagahari K."/>
            <person name="Murakami K."/>
            <person name="Yasuda T."/>
            <person name="Iwayanagi T."/>
            <person name="Wagatsuma M."/>
            <person name="Shiratori A."/>
            <person name="Sudo H."/>
            <person name="Hosoiri T."/>
            <person name="Kaku Y."/>
            <person name="Kodaira H."/>
            <person name="Kondo H."/>
            <person name="Sugawara M."/>
            <person name="Takahashi M."/>
            <person name="Kanda K."/>
            <person name="Yokoi T."/>
            <person name="Furuya T."/>
            <person name="Kikkawa E."/>
            <person name="Omura Y."/>
            <person name="Abe K."/>
            <person name="Kamihara K."/>
            <person name="Katsuta N."/>
            <person name="Sato K."/>
            <person name="Tanikawa M."/>
            <person name="Yamazaki M."/>
            <person name="Ninomiya K."/>
            <person name="Ishibashi T."/>
            <person name="Yamashita H."/>
            <person name="Murakawa K."/>
            <person name="Fujimori K."/>
            <person name="Tanai H."/>
            <person name="Kimata M."/>
            <person name="Watanabe M."/>
            <person name="Hiraoka S."/>
            <person name="Chiba Y."/>
            <person name="Ishida S."/>
            <person name="Ono Y."/>
            <person name="Takiguchi S."/>
            <person name="Watanabe S."/>
            <person name="Yosida M."/>
            <person name="Hotuta T."/>
            <person name="Kusano J."/>
            <person name="Kanehori K."/>
            <person name="Takahashi-Fujii A."/>
            <person name="Hara H."/>
            <person name="Tanase T.-O."/>
            <person name="Nomura Y."/>
            <person name="Togiya S."/>
            <person name="Komai F."/>
            <person name="Hara R."/>
            <person name="Takeuchi K."/>
            <person name="Arita M."/>
            <person name="Imose N."/>
            <person name="Musashino K."/>
            <person name="Yuuki H."/>
            <person name="Oshima A."/>
            <person name="Sasaki N."/>
            <person name="Aotsuka S."/>
            <person name="Yoshikawa Y."/>
            <person name="Matsunawa H."/>
            <person name="Ichihara T."/>
            <person name="Shiohata N."/>
            <person name="Sano S."/>
            <person name="Moriya S."/>
            <person name="Momiyama H."/>
            <person name="Satoh N."/>
            <person name="Takami S."/>
            <person name="Terashima Y."/>
            <person name="Suzuki O."/>
            <person name="Nakagawa S."/>
            <person name="Senoh A."/>
            <person name="Mizoguchi H."/>
            <person name="Goto Y."/>
            <person name="Shimizu F."/>
            <person name="Wakebe H."/>
            <person name="Hishigaki H."/>
            <person name="Watanabe T."/>
            <person name="Sugiyama A."/>
            <person name="Takemoto M."/>
            <person name="Kawakami B."/>
            <person name="Yamazaki M."/>
            <person name="Watanabe K."/>
            <person name="Kumagai A."/>
            <person name="Itakura S."/>
            <person name="Fukuzumi Y."/>
            <person name="Fujimori Y."/>
            <person name="Komiyama M."/>
            <person name="Tashiro H."/>
            <person name="Tanigami A."/>
            <person name="Fujiwara T."/>
            <person name="Ono T."/>
            <person name="Yamada K."/>
            <person name="Fujii Y."/>
            <person name="Ozaki K."/>
            <person name="Hirao M."/>
            <person name="Ohmori Y."/>
            <person name="Kawabata A."/>
            <person name="Hikiji T."/>
            <person name="Kobatake N."/>
            <person name="Inagaki H."/>
            <person name="Ikema Y."/>
            <person name="Okamoto S."/>
            <person name="Okitani R."/>
            <person name="Kawakami T."/>
            <person name="Noguchi S."/>
            <person name="Itoh T."/>
            <person name="Shigeta K."/>
            <person name="Senba T."/>
            <person name="Matsumura K."/>
            <person name="Nakajima Y."/>
            <person name="Mizuno T."/>
            <person name="Morinaga M."/>
            <person name="Sasaki M."/>
            <person name="Togashi T."/>
            <person name="Oyama M."/>
            <person name="Hata H."/>
            <person name="Watanabe M."/>
            <person name="Komatsu T."/>
            <person name="Mizushima-Sugano J."/>
            <person name="Satoh T."/>
            <person name="Shirai Y."/>
            <person name="Takahashi Y."/>
            <person name="Nakagawa K."/>
            <person name="Okumura K."/>
            <person name="Nagase T."/>
            <person name="Nomura N."/>
            <person name="Kikuchi H."/>
            <person name="Masuho Y."/>
            <person name="Yamashita R."/>
            <person name="Nakai K."/>
            <person name="Yada T."/>
            <person name="Nakamura Y."/>
            <person name="Ohara O."/>
            <person name="Isogai T."/>
            <person name="Sugano S."/>
        </authorList>
    </citation>
    <scope>NUCLEOTIDE SEQUENCE [LARGE SCALE MRNA]</scope>
    <source>
        <tissue>Colon mucosa</tissue>
    </source>
</reference>
<reference key="3">
    <citation type="journal article" date="2007" name="BMC Genomics">
        <title>The full-ORF clone resource of the German cDNA consortium.</title>
        <authorList>
            <person name="Bechtel S."/>
            <person name="Rosenfelder H."/>
            <person name="Duda A."/>
            <person name="Schmidt C.P."/>
            <person name="Ernst U."/>
            <person name="Wellenreuther R."/>
            <person name="Mehrle A."/>
            <person name="Schuster C."/>
            <person name="Bahr A."/>
            <person name="Bloecker H."/>
            <person name="Heubner D."/>
            <person name="Hoerlein A."/>
            <person name="Michel G."/>
            <person name="Wedler H."/>
            <person name="Koehrer K."/>
            <person name="Ottenwaelder B."/>
            <person name="Poustka A."/>
            <person name="Wiemann S."/>
            <person name="Schupp I."/>
        </authorList>
    </citation>
    <scope>NUCLEOTIDE SEQUENCE [LARGE SCALE MRNA]</scope>
    <source>
        <tissue>Testis</tissue>
    </source>
</reference>
<reference key="4">
    <citation type="journal article" date="2004" name="Genome Res.">
        <title>The status, quality, and expansion of the NIH full-length cDNA project: the Mammalian Gene Collection (MGC).</title>
        <authorList>
            <consortium name="The MGC Project Team"/>
        </authorList>
    </citation>
    <scope>NUCLEOTIDE SEQUENCE [LARGE SCALE MRNA]</scope>
    <source>
        <tissue>Lung</tissue>
    </source>
</reference>
<reference key="5">
    <citation type="journal article" date="2005" name="J. Biol. Chem.">
        <title>{gamma}-Globin gene expression in chemical inducer of dimerization (CID)-dependent multipotential cells established from human {beta}-globin locus yeast artificial chromosome ({beta}-YAC) transgenic mice.</title>
        <authorList>
            <person name="Blau C.A."/>
            <person name="Barbas C.F."/>
            <person name="Bomhoff A.L."/>
            <person name="Neades R."/>
            <person name="Yan J."/>
            <person name="Navas P.A."/>
            <person name="Peterson K.R."/>
        </authorList>
    </citation>
    <scope>FUNCTION</scope>
</reference>
<reference key="6">
    <citation type="journal article" date="2011" name="BMC Syst. Biol.">
        <title>Initial characterization of the human central proteome.</title>
        <authorList>
            <person name="Burkard T.R."/>
            <person name="Planyavsky M."/>
            <person name="Kaupe I."/>
            <person name="Breitwieser F.P."/>
            <person name="Buerckstuemmer T."/>
            <person name="Bennett K.L."/>
            <person name="Superti-Furga G."/>
            <person name="Colinge J."/>
        </authorList>
    </citation>
    <scope>IDENTIFICATION BY MASS SPECTROMETRY [LARGE SCALE ANALYSIS]</scope>
</reference>
<reference key="7">
    <citation type="journal article" date="2014" name="J. Proteomics">
        <title>An enzyme assisted RP-RPLC approach for in-depth analysis of human liver phosphoproteome.</title>
        <authorList>
            <person name="Bian Y."/>
            <person name="Song C."/>
            <person name="Cheng K."/>
            <person name="Dong M."/>
            <person name="Wang F."/>
            <person name="Huang J."/>
            <person name="Sun D."/>
            <person name="Wang L."/>
            <person name="Ye M."/>
            <person name="Zou H."/>
        </authorList>
    </citation>
    <scope>PHOSPHORYLATION [LARGE SCALE ANALYSIS] AT SER-49</scope>
    <scope>IDENTIFICATION BY MASS SPECTROMETRY [LARGE SCALE ANALYSIS]</scope>
    <source>
        <tissue>Liver</tissue>
    </source>
</reference>